<name>HUTU_THEAC</name>
<feature type="chain" id="PRO_0000207371" description="Probable urocanate hydratase">
    <location>
        <begin position="1"/>
        <end position="554"/>
    </location>
</feature>
<feature type="active site" evidence="1">
    <location>
        <position position="408"/>
    </location>
</feature>
<feature type="binding site" evidence="1">
    <location>
        <begin position="49"/>
        <end position="50"/>
    </location>
    <ligand>
        <name>NAD(+)</name>
        <dbReference type="ChEBI" id="CHEBI:57540"/>
    </ligand>
</feature>
<feature type="binding site" evidence="1">
    <location>
        <position position="127"/>
    </location>
    <ligand>
        <name>NAD(+)</name>
        <dbReference type="ChEBI" id="CHEBI:57540"/>
    </ligand>
</feature>
<feature type="binding site" evidence="1">
    <location>
        <position position="194"/>
    </location>
    <ligand>
        <name>NAD(+)</name>
        <dbReference type="ChEBI" id="CHEBI:57540"/>
    </ligand>
</feature>
<feature type="binding site" evidence="1">
    <location>
        <begin position="240"/>
        <end position="241"/>
    </location>
    <ligand>
        <name>NAD(+)</name>
        <dbReference type="ChEBI" id="CHEBI:57540"/>
    </ligand>
</feature>
<feature type="binding site" evidence="1">
    <location>
        <begin position="261"/>
        <end position="265"/>
    </location>
    <ligand>
        <name>NAD(+)</name>
        <dbReference type="ChEBI" id="CHEBI:57540"/>
    </ligand>
</feature>
<feature type="binding site" evidence="1">
    <location>
        <begin position="271"/>
        <end position="272"/>
    </location>
    <ligand>
        <name>NAD(+)</name>
        <dbReference type="ChEBI" id="CHEBI:57540"/>
    </ligand>
</feature>
<feature type="binding site" evidence="1">
    <location>
        <position position="320"/>
    </location>
    <ligand>
        <name>NAD(+)</name>
        <dbReference type="ChEBI" id="CHEBI:57540"/>
    </ligand>
</feature>
<feature type="binding site" evidence="1">
    <location>
        <position position="490"/>
    </location>
    <ligand>
        <name>NAD(+)</name>
        <dbReference type="ChEBI" id="CHEBI:57540"/>
    </ligand>
</feature>
<protein>
    <recommendedName>
        <fullName evidence="1">Probable urocanate hydratase</fullName>
        <shortName evidence="1">Urocanase</shortName>
        <ecNumber evidence="1">4.2.1.49</ecNumber>
    </recommendedName>
    <alternativeName>
        <fullName evidence="1">Imidazolonepropionate hydrolase</fullName>
    </alternativeName>
</protein>
<gene>
    <name evidence="1" type="primary">hutU</name>
    <name type="ordered locus">Ta0239</name>
</gene>
<sequence length="554" mass="61453">MESKVREIHAPRGKTLNTKGWGQEAALRLLMNNLDPMVAKDPANLIVYGGKGKAARNWEAFDKIVQELKRLENDETLLIQSGKPVGVFKTTKDAPRVLIVNAQIVPHWATDDVFWDLEARGLTMFGQMTAGSWIYIGTQGVLQGTYETLSALARKEFGKDDLSGKWVLTSGLGEMGGAQPLAITMNNASGIVVEVDEEKIKRRLRDKYLDTWTESLDEALKMKDESLAEGKPTSIGLLGNAATVYDELMRRGIVPDVVSDQTAAHDLNLGYIPEGYTVESAAKFRDENREEYIKRVYASIVKEARAILWFQRHGSKTFDYGNNFRTRAQEGGMKDAFEIPGYVPAYIRDLFAVGSGPFRWVALSGDPQDIYRIDDAIIKNFQKDQHLVRWIKLAKERVHFQGLPARICYASYGEREEIGLMINDMVRSGDLQAPVAIGRDHHDTGSVASPYRETEKMKDGSDAIADWPILNALLNAISGATWVSVHHGGGTAIGNAIHAGFVIVADGTKDAEERIKRVLNADPGIGVIRHADAGYESSIDIIKKGPKFRYPYIN</sequence>
<accession>Q9HLI9</accession>
<dbReference type="EC" id="4.2.1.49" evidence="1"/>
<dbReference type="EMBL" id="AL445063">
    <property type="protein sequence ID" value="CAC11384.1"/>
    <property type="status" value="ALT_INIT"/>
    <property type="molecule type" value="Genomic_DNA"/>
</dbReference>
<dbReference type="RefSeq" id="WP_010900668.1">
    <property type="nucleotide sequence ID" value="NC_002578.1"/>
</dbReference>
<dbReference type="SMR" id="Q9HLI9"/>
<dbReference type="STRING" id="273075.gene:9571456"/>
<dbReference type="PaxDb" id="273075-Ta0239m"/>
<dbReference type="EnsemblBacteria" id="CAC11384">
    <property type="protein sequence ID" value="CAC11384"/>
    <property type="gene ID" value="CAC11384"/>
</dbReference>
<dbReference type="KEGG" id="tac:Ta0239"/>
<dbReference type="eggNOG" id="arCOG04670">
    <property type="taxonomic scope" value="Archaea"/>
</dbReference>
<dbReference type="HOGENOM" id="CLU_018868_0_1_2"/>
<dbReference type="InParanoid" id="Q9HLI9"/>
<dbReference type="OrthoDB" id="173478at2157"/>
<dbReference type="UniPathway" id="UPA00379">
    <property type="reaction ID" value="UER00550"/>
</dbReference>
<dbReference type="Proteomes" id="UP000001024">
    <property type="component" value="Chromosome"/>
</dbReference>
<dbReference type="GO" id="GO:0005737">
    <property type="term" value="C:cytoplasm"/>
    <property type="evidence" value="ECO:0007669"/>
    <property type="project" value="UniProtKB-SubCell"/>
</dbReference>
<dbReference type="GO" id="GO:0016153">
    <property type="term" value="F:urocanate hydratase activity"/>
    <property type="evidence" value="ECO:0007669"/>
    <property type="project" value="UniProtKB-UniRule"/>
</dbReference>
<dbReference type="GO" id="GO:0019556">
    <property type="term" value="P:L-histidine catabolic process to glutamate and formamide"/>
    <property type="evidence" value="ECO:0007669"/>
    <property type="project" value="UniProtKB-UniPathway"/>
</dbReference>
<dbReference type="GO" id="GO:0019557">
    <property type="term" value="P:L-histidine catabolic process to glutamate and formate"/>
    <property type="evidence" value="ECO:0007669"/>
    <property type="project" value="UniProtKB-UniPathway"/>
</dbReference>
<dbReference type="Gene3D" id="3.40.50.10730">
    <property type="entry name" value="Urocanase like domains"/>
    <property type="match status" value="1"/>
</dbReference>
<dbReference type="Gene3D" id="3.40.1770.10">
    <property type="entry name" value="Urocanase superfamily"/>
    <property type="match status" value="1"/>
</dbReference>
<dbReference type="HAMAP" id="MF_00577">
    <property type="entry name" value="HutU"/>
    <property type="match status" value="1"/>
</dbReference>
<dbReference type="InterPro" id="IPR055351">
    <property type="entry name" value="Urocanase"/>
</dbReference>
<dbReference type="InterPro" id="IPR023637">
    <property type="entry name" value="Urocanase-like"/>
</dbReference>
<dbReference type="InterPro" id="IPR035401">
    <property type="entry name" value="Urocanase_C"/>
</dbReference>
<dbReference type="InterPro" id="IPR038364">
    <property type="entry name" value="Urocanase_central_sf"/>
</dbReference>
<dbReference type="InterPro" id="IPR023636">
    <property type="entry name" value="Urocanase_CS"/>
</dbReference>
<dbReference type="InterPro" id="IPR035400">
    <property type="entry name" value="Urocanase_N"/>
</dbReference>
<dbReference type="InterPro" id="IPR035085">
    <property type="entry name" value="Urocanase_Rossmann-like"/>
</dbReference>
<dbReference type="InterPro" id="IPR036190">
    <property type="entry name" value="Urocanase_sf"/>
</dbReference>
<dbReference type="NCBIfam" id="TIGR01228">
    <property type="entry name" value="hutU"/>
    <property type="match status" value="1"/>
</dbReference>
<dbReference type="NCBIfam" id="NF003820">
    <property type="entry name" value="PRK05414.1"/>
    <property type="match status" value="1"/>
</dbReference>
<dbReference type="PANTHER" id="PTHR12216">
    <property type="entry name" value="UROCANATE HYDRATASE"/>
    <property type="match status" value="1"/>
</dbReference>
<dbReference type="PANTHER" id="PTHR12216:SF4">
    <property type="entry name" value="UROCANATE HYDRATASE"/>
    <property type="match status" value="1"/>
</dbReference>
<dbReference type="Pfam" id="PF01175">
    <property type="entry name" value="Urocanase"/>
    <property type="match status" value="1"/>
</dbReference>
<dbReference type="Pfam" id="PF17392">
    <property type="entry name" value="Urocanase_C"/>
    <property type="match status" value="1"/>
</dbReference>
<dbReference type="Pfam" id="PF17391">
    <property type="entry name" value="Urocanase_N"/>
    <property type="match status" value="1"/>
</dbReference>
<dbReference type="PIRSF" id="PIRSF001423">
    <property type="entry name" value="Urocanate_hydrat"/>
    <property type="match status" value="1"/>
</dbReference>
<dbReference type="SUPFAM" id="SSF111326">
    <property type="entry name" value="Urocanase"/>
    <property type="match status" value="1"/>
</dbReference>
<dbReference type="PROSITE" id="PS01233">
    <property type="entry name" value="UROCANASE"/>
    <property type="match status" value="1"/>
</dbReference>
<comment type="function">
    <text evidence="1">Catalyzes the conversion of urocanate to 4-imidazolone-5-propionate.</text>
</comment>
<comment type="catalytic activity">
    <reaction evidence="1">
        <text>4-imidazolone-5-propanoate = trans-urocanate + H2O</text>
        <dbReference type="Rhea" id="RHEA:13101"/>
        <dbReference type="ChEBI" id="CHEBI:15377"/>
        <dbReference type="ChEBI" id="CHEBI:17771"/>
        <dbReference type="ChEBI" id="CHEBI:77893"/>
        <dbReference type="EC" id="4.2.1.49"/>
    </reaction>
</comment>
<comment type="cofactor">
    <cofactor evidence="1">
        <name>NAD(+)</name>
        <dbReference type="ChEBI" id="CHEBI:57540"/>
    </cofactor>
    <text evidence="1">Binds 1 NAD(+) per subunit.</text>
</comment>
<comment type="pathway">
    <text evidence="1">Amino-acid degradation; L-histidine degradation into L-glutamate; N-formimidoyl-L-glutamate from L-histidine: step 2/3.</text>
</comment>
<comment type="subcellular location">
    <subcellularLocation>
        <location evidence="1">Cytoplasm</location>
    </subcellularLocation>
</comment>
<comment type="similarity">
    <text evidence="1">Belongs to the urocanase family.</text>
</comment>
<comment type="sequence caution" evidence="2">
    <conflict type="erroneous initiation">
        <sequence resource="EMBL-CDS" id="CAC11384"/>
    </conflict>
</comment>
<keyword id="KW-0963">Cytoplasm</keyword>
<keyword id="KW-0369">Histidine metabolism</keyword>
<keyword id="KW-0456">Lyase</keyword>
<keyword id="KW-0520">NAD</keyword>
<keyword id="KW-1185">Reference proteome</keyword>
<evidence type="ECO:0000255" key="1">
    <source>
        <dbReference type="HAMAP-Rule" id="MF_00577"/>
    </source>
</evidence>
<evidence type="ECO:0000305" key="2"/>
<organism>
    <name type="scientific">Thermoplasma acidophilum (strain ATCC 25905 / DSM 1728 / JCM 9062 / NBRC 15155 / AMRC-C165)</name>
    <dbReference type="NCBI Taxonomy" id="273075"/>
    <lineage>
        <taxon>Archaea</taxon>
        <taxon>Methanobacteriati</taxon>
        <taxon>Thermoplasmatota</taxon>
        <taxon>Thermoplasmata</taxon>
        <taxon>Thermoplasmatales</taxon>
        <taxon>Thermoplasmataceae</taxon>
        <taxon>Thermoplasma</taxon>
    </lineage>
</organism>
<proteinExistence type="inferred from homology"/>
<reference key="1">
    <citation type="journal article" date="2000" name="Nature">
        <title>The genome sequence of the thermoacidophilic scavenger Thermoplasma acidophilum.</title>
        <authorList>
            <person name="Ruepp A."/>
            <person name="Graml W."/>
            <person name="Santos-Martinez M.-L."/>
            <person name="Koretke K.K."/>
            <person name="Volker C."/>
            <person name="Mewes H.-W."/>
            <person name="Frishman D."/>
            <person name="Stocker S."/>
            <person name="Lupas A.N."/>
            <person name="Baumeister W."/>
        </authorList>
    </citation>
    <scope>NUCLEOTIDE SEQUENCE [LARGE SCALE GENOMIC DNA]</scope>
    <source>
        <strain>ATCC 25905 / DSM 1728 / JCM 9062 / NBRC 15155 / AMRC-C165</strain>
    </source>
</reference>